<organism>
    <name type="scientific">Clostridium perfringens (strain ATCC 13124 / DSM 756 / JCM 1290 / NCIMB 6125 / NCTC 8237 / Type A)</name>
    <dbReference type="NCBI Taxonomy" id="195103"/>
    <lineage>
        <taxon>Bacteria</taxon>
        <taxon>Bacillati</taxon>
        <taxon>Bacillota</taxon>
        <taxon>Clostridia</taxon>
        <taxon>Eubacteriales</taxon>
        <taxon>Clostridiaceae</taxon>
        <taxon>Clostridium</taxon>
    </lineage>
</organism>
<reference key="1">
    <citation type="journal article" date="2006" name="Genome Res.">
        <title>Skewed genomic variability in strains of the toxigenic bacterial pathogen, Clostridium perfringens.</title>
        <authorList>
            <person name="Myers G.S.A."/>
            <person name="Rasko D.A."/>
            <person name="Cheung J.K."/>
            <person name="Ravel J."/>
            <person name="Seshadri R."/>
            <person name="DeBoy R.T."/>
            <person name="Ren Q."/>
            <person name="Varga J."/>
            <person name="Awad M.M."/>
            <person name="Brinkac L.M."/>
            <person name="Daugherty S.C."/>
            <person name="Haft D.H."/>
            <person name="Dodson R.J."/>
            <person name="Madupu R."/>
            <person name="Nelson W.C."/>
            <person name="Rosovitz M.J."/>
            <person name="Sullivan S.A."/>
            <person name="Khouri H."/>
            <person name="Dimitrov G.I."/>
            <person name="Watkins K.L."/>
            <person name="Mulligan S."/>
            <person name="Benton J."/>
            <person name="Radune D."/>
            <person name="Fisher D.J."/>
            <person name="Atkins H.S."/>
            <person name="Hiscox T."/>
            <person name="Jost B.H."/>
            <person name="Billington S.J."/>
            <person name="Songer J.G."/>
            <person name="McClane B.A."/>
            <person name="Titball R.W."/>
            <person name="Rood J.I."/>
            <person name="Melville S.B."/>
            <person name="Paulsen I.T."/>
        </authorList>
    </citation>
    <scope>NUCLEOTIDE SEQUENCE [LARGE SCALE GENOMIC DNA]</scope>
    <source>
        <strain>ATCC 13124 / DSM 756 / JCM 1290 / NCIMB 6125 / NCTC 8237 / S 107 / Type A</strain>
    </source>
</reference>
<evidence type="ECO:0000255" key="1">
    <source>
        <dbReference type="HAMAP-Rule" id="MF_00268"/>
    </source>
</evidence>
<comment type="function">
    <text evidence="1">Can catalyze the hydrolysis of ATP in the presence of single-stranded DNA, the ATP-dependent uptake of single-stranded DNA by duplex DNA, and the ATP-dependent hybridization of homologous single-stranded DNAs. It interacts with LexA causing its activation and leading to its autocatalytic cleavage.</text>
</comment>
<comment type="subcellular location">
    <subcellularLocation>
        <location evidence="1">Cytoplasm</location>
    </subcellularLocation>
</comment>
<comment type="similarity">
    <text evidence="1">Belongs to the RecA family.</text>
</comment>
<gene>
    <name evidence="1" type="primary">recA</name>
    <name type="ordered locus">CPF_1927</name>
</gene>
<accession>Q0TPT0</accession>
<protein>
    <recommendedName>
        <fullName evidence="1">Protein RecA</fullName>
    </recommendedName>
    <alternativeName>
        <fullName evidence="1">Recombinase A</fullName>
    </alternativeName>
</protein>
<proteinExistence type="inferred from homology"/>
<keyword id="KW-0067">ATP-binding</keyword>
<keyword id="KW-0963">Cytoplasm</keyword>
<keyword id="KW-0227">DNA damage</keyword>
<keyword id="KW-0233">DNA recombination</keyword>
<keyword id="KW-0234">DNA repair</keyword>
<keyword id="KW-0238">DNA-binding</keyword>
<keyword id="KW-0547">Nucleotide-binding</keyword>
<keyword id="KW-0742">SOS response</keyword>
<feature type="chain" id="PRO_1000047903" description="Protein RecA">
    <location>
        <begin position="1"/>
        <end position="352"/>
    </location>
</feature>
<feature type="binding site" evidence="1">
    <location>
        <begin position="68"/>
        <end position="75"/>
    </location>
    <ligand>
        <name>ATP</name>
        <dbReference type="ChEBI" id="CHEBI:30616"/>
    </ligand>
</feature>
<sequence length="352" mass="37955">MANIDKDKLKAIEMAMGQIEKQFGKGSVMKLGEQGAPQMDAVSTGCLDLDIALGIGGVPKGRIIEIYGPESSGKTTVALHVVAEAQKLGGAAAYIDAEHALDPVYAKRLGVNIDDLVVSQPDTGEQALEITEALVRSGAIDVLVVDSVAALVPRAEIEGEMGDSHVGLQARLMSQALRKLTGTINKSNCVVIFINQLREKVGIMFGNPETTPGGRALKFYASVRMDIRRIDSIKQGDGITGNRTRVKIVKNKVAPPFKQAEFDIMYNEGISKEGNIVDVGVKENIVQKSGAWFSYGDIRLGQGRENAKQYLKENPAVALDIENQIREKYSLPLAKAVESTSVEENTEESVES</sequence>
<name>RECA_CLOP1</name>
<dbReference type="EMBL" id="CP000246">
    <property type="protein sequence ID" value="ABG83406.1"/>
    <property type="molecule type" value="Genomic_DNA"/>
</dbReference>
<dbReference type="RefSeq" id="WP_003459804.1">
    <property type="nucleotide sequence ID" value="NC_008261.1"/>
</dbReference>
<dbReference type="SMR" id="Q0TPT0"/>
<dbReference type="STRING" id="195103.CPF_1927"/>
<dbReference type="PaxDb" id="195103-CPF_1927"/>
<dbReference type="GeneID" id="93001789"/>
<dbReference type="KEGG" id="cpf:CPF_1927"/>
<dbReference type="eggNOG" id="COG0468">
    <property type="taxonomic scope" value="Bacteria"/>
</dbReference>
<dbReference type="HOGENOM" id="CLU_040469_3_2_9"/>
<dbReference type="Proteomes" id="UP000001823">
    <property type="component" value="Chromosome"/>
</dbReference>
<dbReference type="GO" id="GO:0005829">
    <property type="term" value="C:cytosol"/>
    <property type="evidence" value="ECO:0007669"/>
    <property type="project" value="TreeGrafter"/>
</dbReference>
<dbReference type="GO" id="GO:0005524">
    <property type="term" value="F:ATP binding"/>
    <property type="evidence" value="ECO:0007669"/>
    <property type="project" value="UniProtKB-UniRule"/>
</dbReference>
<dbReference type="GO" id="GO:0016887">
    <property type="term" value="F:ATP hydrolysis activity"/>
    <property type="evidence" value="ECO:0007669"/>
    <property type="project" value="InterPro"/>
</dbReference>
<dbReference type="GO" id="GO:0140664">
    <property type="term" value="F:ATP-dependent DNA damage sensor activity"/>
    <property type="evidence" value="ECO:0007669"/>
    <property type="project" value="InterPro"/>
</dbReference>
<dbReference type="GO" id="GO:0003684">
    <property type="term" value="F:damaged DNA binding"/>
    <property type="evidence" value="ECO:0007669"/>
    <property type="project" value="UniProtKB-UniRule"/>
</dbReference>
<dbReference type="GO" id="GO:0003697">
    <property type="term" value="F:single-stranded DNA binding"/>
    <property type="evidence" value="ECO:0007669"/>
    <property type="project" value="UniProtKB-UniRule"/>
</dbReference>
<dbReference type="GO" id="GO:0006310">
    <property type="term" value="P:DNA recombination"/>
    <property type="evidence" value="ECO:0007669"/>
    <property type="project" value="UniProtKB-UniRule"/>
</dbReference>
<dbReference type="GO" id="GO:0006281">
    <property type="term" value="P:DNA repair"/>
    <property type="evidence" value="ECO:0007669"/>
    <property type="project" value="UniProtKB-UniRule"/>
</dbReference>
<dbReference type="GO" id="GO:0009432">
    <property type="term" value="P:SOS response"/>
    <property type="evidence" value="ECO:0007669"/>
    <property type="project" value="UniProtKB-UniRule"/>
</dbReference>
<dbReference type="CDD" id="cd00983">
    <property type="entry name" value="RecA"/>
    <property type="match status" value="1"/>
</dbReference>
<dbReference type="FunFam" id="3.40.50.300:FF:000087">
    <property type="entry name" value="Recombinase RecA"/>
    <property type="match status" value="1"/>
</dbReference>
<dbReference type="Gene3D" id="3.40.50.300">
    <property type="entry name" value="P-loop containing nucleotide triphosphate hydrolases"/>
    <property type="match status" value="1"/>
</dbReference>
<dbReference type="HAMAP" id="MF_00268">
    <property type="entry name" value="RecA"/>
    <property type="match status" value="1"/>
</dbReference>
<dbReference type="InterPro" id="IPR003593">
    <property type="entry name" value="AAA+_ATPase"/>
</dbReference>
<dbReference type="InterPro" id="IPR013765">
    <property type="entry name" value="DNA_recomb/repair_RecA"/>
</dbReference>
<dbReference type="InterPro" id="IPR020584">
    <property type="entry name" value="DNA_recomb/repair_RecA_CS"/>
</dbReference>
<dbReference type="InterPro" id="IPR027417">
    <property type="entry name" value="P-loop_NTPase"/>
</dbReference>
<dbReference type="InterPro" id="IPR049261">
    <property type="entry name" value="RecA-like_C"/>
</dbReference>
<dbReference type="InterPro" id="IPR049428">
    <property type="entry name" value="RecA-like_N"/>
</dbReference>
<dbReference type="InterPro" id="IPR020588">
    <property type="entry name" value="RecA_ATP-bd"/>
</dbReference>
<dbReference type="InterPro" id="IPR023400">
    <property type="entry name" value="RecA_C_sf"/>
</dbReference>
<dbReference type="InterPro" id="IPR020587">
    <property type="entry name" value="RecA_monomer-monomer_interface"/>
</dbReference>
<dbReference type="NCBIfam" id="TIGR02012">
    <property type="entry name" value="tigrfam_recA"/>
    <property type="match status" value="1"/>
</dbReference>
<dbReference type="PANTHER" id="PTHR45900:SF1">
    <property type="entry name" value="MITOCHONDRIAL DNA REPAIR PROTEIN RECA HOMOLOG-RELATED"/>
    <property type="match status" value="1"/>
</dbReference>
<dbReference type="PANTHER" id="PTHR45900">
    <property type="entry name" value="RECA"/>
    <property type="match status" value="1"/>
</dbReference>
<dbReference type="Pfam" id="PF00154">
    <property type="entry name" value="RecA"/>
    <property type="match status" value="1"/>
</dbReference>
<dbReference type="Pfam" id="PF21096">
    <property type="entry name" value="RecA_C"/>
    <property type="match status" value="1"/>
</dbReference>
<dbReference type="PRINTS" id="PR00142">
    <property type="entry name" value="RECA"/>
</dbReference>
<dbReference type="SMART" id="SM00382">
    <property type="entry name" value="AAA"/>
    <property type="match status" value="1"/>
</dbReference>
<dbReference type="SUPFAM" id="SSF52540">
    <property type="entry name" value="P-loop containing nucleoside triphosphate hydrolases"/>
    <property type="match status" value="1"/>
</dbReference>
<dbReference type="SUPFAM" id="SSF54752">
    <property type="entry name" value="RecA protein, C-terminal domain"/>
    <property type="match status" value="1"/>
</dbReference>
<dbReference type="PROSITE" id="PS00321">
    <property type="entry name" value="RECA_1"/>
    <property type="match status" value="1"/>
</dbReference>
<dbReference type="PROSITE" id="PS50162">
    <property type="entry name" value="RECA_2"/>
    <property type="match status" value="1"/>
</dbReference>
<dbReference type="PROSITE" id="PS50163">
    <property type="entry name" value="RECA_3"/>
    <property type="match status" value="1"/>
</dbReference>